<evidence type="ECO:0000250" key="1">
    <source>
        <dbReference type="UniProtKB" id="P21283"/>
    </source>
</evidence>
<evidence type="ECO:0000250" key="2">
    <source>
        <dbReference type="UniProtKB" id="P31412"/>
    </source>
</evidence>
<evidence type="ECO:0000250" key="3">
    <source>
        <dbReference type="UniProtKB" id="Q5FVI6"/>
    </source>
</evidence>
<evidence type="ECO:0000269" key="4">
    <source>
    </source>
</evidence>
<evidence type="ECO:0000305" key="5"/>
<evidence type="ECO:0007744" key="6">
    <source>
        <dbReference type="PDB" id="6XBW"/>
    </source>
</evidence>
<evidence type="ECO:0007744" key="7">
    <source>
        <dbReference type="PDB" id="6XBY"/>
    </source>
</evidence>
<evidence type="ECO:0007829" key="8">
    <source>
        <dbReference type="PDB" id="6XBW"/>
    </source>
</evidence>
<sequence length="382" mass="43986">MTEFWLISAPGEKTCQQTWEKLHAATTKNNNLAVSSKFNIPDLKVGTLDVLVGLSDELAKLDAFVEGVVKKVAQYMADVLEDSKDKVQENLLANGVDLVTYITRFQWDMAKYPIKQSLKNISEIIAKGVTQIDNDLKSRASAYNNLKGNLQNLERKNAGSLLTRSLAEIVKKDDFVLDSEYLVTLLVVVPKLNHNDWIKQYETLAEMVVPRSSNVLSEDQDSYLCNVTLFRKAVDDFRHKARENKFIVRDFQYNEEEMKADKEEMNRLSTDKKKQFGPLVRWLKVNFSEAFIAWIHVKALRVFVESVLRYGLPVNFQAMLLQPNKKTMKKLREVLYELYKHLDSSAAAIIDAPMDIPGLNLSQQEYYPYVYYKIDCNLLEFK</sequence>
<reference key="1">
    <citation type="journal article" date="1990" name="J. Biol. Chem.">
        <title>Molecular cloning of cDNA encoding the C subunit of H(+)-ATPase from bovine chromaffin granules.</title>
        <authorList>
            <person name="Nelson H."/>
            <person name="Mandiyan S."/>
            <person name="Noumi T."/>
            <person name="Moriyama Y."/>
            <person name="Miedel M.C."/>
            <person name="Nelson N."/>
        </authorList>
    </citation>
    <scope>NUCLEOTIDE SEQUENCE [MRNA]</scope>
    <scope>PARTIAL PROTEIN SEQUENCE</scope>
    <source>
        <tissue>Chromaffin cell</tissue>
    </source>
</reference>
<reference key="2">
    <citation type="submission" date="2006-08" db="EMBL/GenBank/DDBJ databases">
        <authorList>
            <consortium name="NIH - Mammalian Gene Collection (MGC) project"/>
        </authorList>
    </citation>
    <scope>NUCLEOTIDE SEQUENCE [LARGE SCALE MRNA]</scope>
    <source>
        <strain>Hereford</strain>
        <tissue>Fetal muscle</tissue>
    </source>
</reference>
<reference evidence="6 7" key="3">
    <citation type="journal article" date="2020" name="Nat. Commun.">
        <title>Cryo-EM structures of intact V-ATPase from bovine brain.</title>
        <authorList>
            <person name="Wang R."/>
            <person name="Long T."/>
            <person name="Hassan A."/>
            <person name="Wang J."/>
            <person name="Sun Y."/>
            <person name="Xie X.S."/>
            <person name="Li X."/>
        </authorList>
    </citation>
    <scope>STRUCTURE BY ELECTRON MICROSCOPY (3.37 ANGSTROMS) IN COMPLEX WITH ADP</scope>
    <scope>FUNCTION</scope>
    <scope>IDENTIFICATION IN THE V-ATPASE COMPLEX</scope>
    <scope>SUBCELLULAR LOCATION</scope>
    <scope>IDENTIFICATION BY MASS SPECTROMETRY</scope>
    <scope>TISSUE SPECIFICITY</scope>
</reference>
<name>VATC1_BOVIN</name>
<gene>
    <name type="primary">ATP6V1C1</name>
    <name type="synonym">ATP6C</name>
    <name type="synonym">VATC</name>
</gene>
<protein>
    <recommendedName>
        <fullName>V-type proton ATPase subunit C 1</fullName>
        <shortName>V-ATPase subunit C 1</shortName>
    </recommendedName>
    <alternativeName>
        <fullName>Vacuolar proton pump subunit C 1</fullName>
    </alternativeName>
</protein>
<proteinExistence type="evidence at protein level"/>
<organism>
    <name type="scientific">Bos taurus</name>
    <name type="common">Bovine</name>
    <dbReference type="NCBI Taxonomy" id="9913"/>
    <lineage>
        <taxon>Eukaryota</taxon>
        <taxon>Metazoa</taxon>
        <taxon>Chordata</taxon>
        <taxon>Craniata</taxon>
        <taxon>Vertebrata</taxon>
        <taxon>Euteleostomi</taxon>
        <taxon>Mammalia</taxon>
        <taxon>Eutheria</taxon>
        <taxon>Laurasiatheria</taxon>
        <taxon>Artiodactyla</taxon>
        <taxon>Ruminantia</taxon>
        <taxon>Pecora</taxon>
        <taxon>Bovidae</taxon>
        <taxon>Bovinae</taxon>
        <taxon>Bos</taxon>
    </lineage>
</organism>
<accession>P21282</accession>
<accession>Q0VCX0</accession>
<dbReference type="EMBL" id="J05681">
    <property type="protein sequence ID" value="AAA30803.1"/>
    <property type="molecule type" value="mRNA"/>
</dbReference>
<dbReference type="EMBL" id="BC119957">
    <property type="protein sequence ID" value="AAI19958.1"/>
    <property type="molecule type" value="mRNA"/>
</dbReference>
<dbReference type="PIR" id="A23671">
    <property type="entry name" value="A23671"/>
</dbReference>
<dbReference type="RefSeq" id="NP_788849.1">
    <property type="nucleotide sequence ID" value="NM_176676.1"/>
</dbReference>
<dbReference type="PDB" id="6XBW">
    <property type="method" value="EM"/>
    <property type="resolution" value="3.37 A"/>
    <property type="chains" value="G=1-382"/>
</dbReference>
<dbReference type="PDB" id="6XBY">
    <property type="method" value="EM"/>
    <property type="resolution" value="3.79 A"/>
    <property type="chains" value="G=1-382"/>
</dbReference>
<dbReference type="PDB" id="7KHR">
    <property type="method" value="EM"/>
    <property type="resolution" value="3.62 A"/>
    <property type="chains" value="G=1-382"/>
</dbReference>
<dbReference type="PDBsum" id="6XBW"/>
<dbReference type="PDBsum" id="6XBY"/>
<dbReference type="PDBsum" id="7KHR"/>
<dbReference type="EMDB" id="EMD-22121"/>
<dbReference type="EMDB" id="EMD-22122"/>
<dbReference type="EMDB" id="EMD-22880"/>
<dbReference type="SMR" id="P21282"/>
<dbReference type="CORUM" id="P21282"/>
<dbReference type="FunCoup" id="P21282">
    <property type="interactions" value="3279"/>
</dbReference>
<dbReference type="STRING" id="9913.ENSBTAP00000017968"/>
<dbReference type="PaxDb" id="9913-ENSBTAP00000017968"/>
<dbReference type="Ensembl" id="ENSBTAT00000017968.6">
    <property type="protein sequence ID" value="ENSBTAP00000017968.4"/>
    <property type="gene ID" value="ENSBTAG00000013513.6"/>
</dbReference>
<dbReference type="GeneID" id="338089"/>
<dbReference type="KEGG" id="bta:338089"/>
<dbReference type="CTD" id="528"/>
<dbReference type="VEuPathDB" id="HostDB:ENSBTAG00000013513"/>
<dbReference type="VGNC" id="VGNC:26319">
    <property type="gene designation" value="ATP6V1C1"/>
</dbReference>
<dbReference type="eggNOG" id="KOG2909">
    <property type="taxonomic scope" value="Eukaryota"/>
</dbReference>
<dbReference type="GeneTree" id="ENSGT00390000004263"/>
<dbReference type="HOGENOM" id="CLU_017554_3_0_1"/>
<dbReference type="InParanoid" id="P21282"/>
<dbReference type="OMA" id="VMIWIHV"/>
<dbReference type="OrthoDB" id="6605928at2759"/>
<dbReference type="TreeFam" id="TF314912"/>
<dbReference type="Reactome" id="R-BTA-1222556">
    <property type="pathway name" value="ROS and RNS production in phagocytes"/>
</dbReference>
<dbReference type="Reactome" id="R-BTA-77387">
    <property type="pathway name" value="Insulin receptor recycling"/>
</dbReference>
<dbReference type="Reactome" id="R-BTA-917977">
    <property type="pathway name" value="Transferrin endocytosis and recycling"/>
</dbReference>
<dbReference type="Reactome" id="R-BTA-9639288">
    <property type="pathway name" value="Amino acids regulate mTORC1"/>
</dbReference>
<dbReference type="Reactome" id="R-BTA-983712">
    <property type="pathway name" value="Ion channel transport"/>
</dbReference>
<dbReference type="Proteomes" id="UP000009136">
    <property type="component" value="Chromosome 14"/>
</dbReference>
<dbReference type="Bgee" id="ENSBTAG00000013513">
    <property type="expression patterns" value="Expressed in occipital lobe and 103 other cell types or tissues"/>
</dbReference>
<dbReference type="GO" id="GO:0030665">
    <property type="term" value="C:clathrin-coated vesicle membrane"/>
    <property type="evidence" value="ECO:0007669"/>
    <property type="project" value="UniProtKB-SubCell"/>
</dbReference>
<dbReference type="GO" id="GO:0005886">
    <property type="term" value="C:plasma membrane"/>
    <property type="evidence" value="ECO:0000250"/>
    <property type="project" value="UniProtKB"/>
</dbReference>
<dbReference type="GO" id="GO:0030672">
    <property type="term" value="C:synaptic vesicle membrane"/>
    <property type="evidence" value="ECO:0007669"/>
    <property type="project" value="UniProtKB-SubCell"/>
</dbReference>
<dbReference type="GO" id="GO:0000221">
    <property type="term" value="C:vacuolar proton-transporting V-type ATPase, V1 domain"/>
    <property type="evidence" value="ECO:0000314"/>
    <property type="project" value="UniProtKB"/>
</dbReference>
<dbReference type="GO" id="GO:0046961">
    <property type="term" value="F:proton-transporting ATPase activity, rotational mechanism"/>
    <property type="evidence" value="ECO:0000318"/>
    <property type="project" value="GO_Central"/>
</dbReference>
<dbReference type="GO" id="GO:0045851">
    <property type="term" value="P:pH reduction"/>
    <property type="evidence" value="ECO:0000305"/>
    <property type="project" value="UniProtKB"/>
</dbReference>
<dbReference type="GO" id="GO:1902600">
    <property type="term" value="P:proton transmembrane transport"/>
    <property type="evidence" value="ECO:0000305"/>
    <property type="project" value="UniProtKB"/>
</dbReference>
<dbReference type="GO" id="GO:0097401">
    <property type="term" value="P:synaptic vesicle lumen acidification"/>
    <property type="evidence" value="ECO:0007669"/>
    <property type="project" value="Ensembl"/>
</dbReference>
<dbReference type="CDD" id="cd14785">
    <property type="entry name" value="V-ATPase_C"/>
    <property type="match status" value="1"/>
</dbReference>
<dbReference type="FunFam" id="1.20.1460.10:FF:000004">
    <property type="entry name" value="V-type proton ATPase subunit C"/>
    <property type="match status" value="1"/>
</dbReference>
<dbReference type="FunFam" id="3.30.70.100:FF:000002">
    <property type="entry name" value="V-type proton ATPase subunit C"/>
    <property type="match status" value="1"/>
</dbReference>
<dbReference type="FunFam" id="3.30.70.1180:FF:000003">
    <property type="entry name" value="V-type proton ATPase subunit C"/>
    <property type="match status" value="1"/>
</dbReference>
<dbReference type="Gene3D" id="3.30.70.100">
    <property type="match status" value="1"/>
</dbReference>
<dbReference type="Gene3D" id="1.20.1460.10">
    <property type="entry name" value="subunit c (vma5p) of the yeast v-atpase, domain 2"/>
    <property type="match status" value="1"/>
</dbReference>
<dbReference type="Gene3D" id="3.30.70.1180">
    <property type="entry name" value="Vacuolar atp synthase subunit c, domain 1"/>
    <property type="match status" value="1"/>
</dbReference>
<dbReference type="InterPro" id="IPR004907">
    <property type="entry name" value="ATPase_V1-cplx_csu"/>
</dbReference>
<dbReference type="InterPro" id="IPR036132">
    <property type="entry name" value="Vac_ATP_synth_c_sf"/>
</dbReference>
<dbReference type="PANTHER" id="PTHR10137">
    <property type="entry name" value="V-TYPE PROTON ATPASE SUBUNIT C"/>
    <property type="match status" value="1"/>
</dbReference>
<dbReference type="PANTHER" id="PTHR10137:SF5">
    <property type="entry name" value="V-TYPE PROTON ATPASE SUBUNIT C 1"/>
    <property type="match status" value="1"/>
</dbReference>
<dbReference type="Pfam" id="PF03223">
    <property type="entry name" value="V-ATPase_C"/>
    <property type="match status" value="1"/>
</dbReference>
<dbReference type="SUPFAM" id="SSF118203">
    <property type="entry name" value="Vacuolar ATP synthase subunit C"/>
    <property type="match status" value="1"/>
</dbReference>
<keyword id="KW-0002">3D-structure</keyword>
<keyword id="KW-0007">Acetylation</keyword>
<keyword id="KW-0968">Cytoplasmic vesicle</keyword>
<keyword id="KW-0903">Direct protein sequencing</keyword>
<keyword id="KW-0375">Hydrogen ion transport</keyword>
<keyword id="KW-0406">Ion transport</keyword>
<keyword id="KW-0472">Membrane</keyword>
<keyword id="KW-1185">Reference proteome</keyword>
<keyword id="KW-0770">Synapse</keyword>
<keyword id="KW-0813">Transport</keyword>
<feature type="initiator methionine" description="Removed" evidence="1">
    <location>
        <position position="1"/>
    </location>
</feature>
<feature type="chain" id="PRO_0000209347" description="V-type proton ATPase subunit C 1">
    <location>
        <begin position="2"/>
        <end position="382"/>
    </location>
</feature>
<feature type="modified residue" description="N-acetylthreonine" evidence="1">
    <location>
        <position position="2"/>
    </location>
</feature>
<feature type="turn" evidence="8">
    <location>
        <begin position="19"/>
        <end position="22"/>
    </location>
</feature>
<feature type="turn" evidence="8">
    <location>
        <begin position="24"/>
        <end position="26"/>
    </location>
</feature>
<feature type="turn" evidence="8">
    <location>
        <begin position="30"/>
        <end position="32"/>
    </location>
</feature>
<feature type="helix" evidence="8">
    <location>
        <begin position="49"/>
        <end position="71"/>
    </location>
</feature>
<feature type="helix" evidence="8">
    <location>
        <begin position="74"/>
        <end position="77"/>
    </location>
</feature>
<feature type="strand" evidence="8">
    <location>
        <begin position="92"/>
        <end position="94"/>
    </location>
</feature>
<feature type="helix" evidence="8">
    <location>
        <begin position="97"/>
        <end position="101"/>
    </location>
</feature>
<feature type="strand" evidence="8">
    <location>
        <begin position="108"/>
        <end position="111"/>
    </location>
</feature>
<feature type="strand" evidence="8">
    <location>
        <begin position="113"/>
        <end position="119"/>
    </location>
</feature>
<feature type="helix" evidence="8">
    <location>
        <begin position="120"/>
        <end position="156"/>
    </location>
</feature>
<feature type="turn" evidence="8">
    <location>
        <begin position="161"/>
        <end position="163"/>
    </location>
</feature>
<feature type="turn" evidence="8">
    <location>
        <begin position="167"/>
        <end position="169"/>
    </location>
</feature>
<feature type="helix" evidence="8">
    <location>
        <begin position="172"/>
        <end position="174"/>
    </location>
</feature>
<feature type="strand" evidence="8">
    <location>
        <begin position="180"/>
        <end position="191"/>
    </location>
</feature>
<feature type="helix" evidence="8">
    <location>
        <begin position="194"/>
        <end position="198"/>
    </location>
</feature>
<feature type="turn" evidence="8">
    <location>
        <begin position="199"/>
        <end position="202"/>
    </location>
</feature>
<feature type="strand" evidence="8">
    <location>
        <begin position="203"/>
        <end position="207"/>
    </location>
</feature>
<feature type="strand" evidence="8">
    <location>
        <begin position="214"/>
        <end position="218"/>
    </location>
</feature>
<feature type="strand" evidence="8">
    <location>
        <begin position="220"/>
        <end position="230"/>
    </location>
</feature>
<feature type="helix" evidence="8">
    <location>
        <begin position="231"/>
        <end position="233"/>
    </location>
</feature>
<feature type="helix" evidence="8">
    <location>
        <begin position="234"/>
        <end position="243"/>
    </location>
</feature>
<feature type="strand" evidence="8">
    <location>
        <begin position="247"/>
        <end position="249"/>
    </location>
</feature>
<feature type="helix" evidence="8">
    <location>
        <begin position="255"/>
        <end position="303"/>
    </location>
</feature>
<feature type="turn" evidence="8">
    <location>
        <begin position="306"/>
        <end position="308"/>
    </location>
</feature>
<feature type="helix" evidence="8">
    <location>
        <begin position="328"/>
        <end position="340"/>
    </location>
</feature>
<feature type="strand" evidence="8">
    <location>
        <begin position="368"/>
        <end position="371"/>
    </location>
</feature>
<comment type="function">
    <text evidence="2 4">Subunit of the V1 complex of vacuolar(H+)-ATPase (V-ATPase), a multisubunit enzyme composed of a peripheral complex (V1) that hydrolyzes ATP and a membrane integral complex (V0) that translocates protons (PubMed:32764564). V-ATPase is responsible for acidifying and maintaining the pH of intracellular compartments and in some cell types, is targeted to the plasma membrane, where it is responsible for acidifying the extracellular environment (PubMed:32764564). Subunit C is necessary for the assembly of the catalytic sector of the enzyme and is likely to have a specific function in its catalytic activity (By similarity).</text>
</comment>
<comment type="subunit">
    <text evidence="4">V-ATPase is a heteromultimeric enzyme made up of two complexes: the ATP-hydrolytic V1 complex and the proton translocation V0 complex (PubMed:32764564). The V1 complex consists of three catalytic AB heterodimers that form a heterohexamer, three peripheral stalks each consisting of EG heterodimers, one central rotor including subunits D and F, and the regulatory subunits C and H (PubMed:32764564). The proton translocation complex V0 consists of the proton transport subunit a, a ring of proteolipid subunits c9c'', rotary subunit d, subunits e and f, and the accessory subunits ATP6AP1/Ac45 and ATP6AP2/PRR (PubMed:32764564).</text>
</comment>
<comment type="subcellular location">
    <subcellularLocation>
        <location evidence="3">Cytoplasmic vesicle</location>
        <location evidence="3">Secretory vesicle</location>
        <location evidence="3">Synaptic vesicle membrane</location>
        <topology evidence="5">Peripheral membrane protein</topology>
    </subcellularLocation>
    <subcellularLocation>
        <location evidence="4">Cytoplasmic vesicle</location>
        <location evidence="4">Clathrin-coated vesicle membrane</location>
        <topology evidence="5">Peripheral membrane protein</topology>
    </subcellularLocation>
</comment>
<comment type="tissue specificity">
    <text evidence="4">Expressed in brain (at protein level).</text>
</comment>
<comment type="similarity">
    <text evidence="5">Belongs to the V-ATPase C subunit family.</text>
</comment>